<organism>
    <name type="scientific">Caenorhabditis elegans</name>
    <dbReference type="NCBI Taxonomy" id="6239"/>
    <lineage>
        <taxon>Eukaryota</taxon>
        <taxon>Metazoa</taxon>
        <taxon>Ecdysozoa</taxon>
        <taxon>Nematoda</taxon>
        <taxon>Chromadorea</taxon>
        <taxon>Rhabditida</taxon>
        <taxon>Rhabditina</taxon>
        <taxon>Rhabditomorpha</taxon>
        <taxon>Rhabditoidea</taxon>
        <taxon>Rhabditidae</taxon>
        <taxon>Peloderinae</taxon>
        <taxon>Caenorhabditis</taxon>
    </lineage>
</organism>
<comment type="function">
    <text evidence="1">RNA-binding component of the eukaryotic translation initiation factor 3 (eIF-3) complex, which is involved in protein synthesis of a specialized repertoire of mRNAs and, together with other initiation factors, stimulates binding of mRNA and methionyl-tRNAi to the 40S ribosome. The eIF-3 complex specifically targets and initiates translation of a subset of mRNAs involved in cell proliferation.</text>
</comment>
<comment type="subunit">
    <text evidence="1">Component of the eukaryotic translation initiation factor 3 (eIF-3) complex.</text>
</comment>
<comment type="subcellular location">
    <subcellularLocation>
        <location evidence="1">Cytoplasm</location>
    </subcellularLocation>
</comment>
<comment type="disruption phenotype">
    <text evidence="2">Extended lifespan in adults.</text>
</comment>
<comment type="similarity">
    <text evidence="1">Belongs to the eIF-3 subunit B family.</text>
</comment>
<dbReference type="EMBL" id="BX284602">
    <property type="protein sequence ID" value="CAA21681.2"/>
    <property type="molecule type" value="Genomic_DNA"/>
</dbReference>
<dbReference type="EMBL" id="BX284602">
    <property type="protein sequence ID" value="CAE46682.2"/>
    <property type="molecule type" value="Genomic_DNA"/>
</dbReference>
<dbReference type="PIR" id="T27148">
    <property type="entry name" value="T27148"/>
</dbReference>
<dbReference type="RefSeq" id="NP_001022470.2">
    <property type="nucleotide sequence ID" value="NM_001027299.5"/>
</dbReference>
<dbReference type="SMR" id="Q9XWI6"/>
<dbReference type="BioGRID" id="40419">
    <property type="interactions" value="31"/>
</dbReference>
<dbReference type="DIP" id="DIP-26989N"/>
<dbReference type="FunCoup" id="Q9XWI6">
    <property type="interactions" value="3242"/>
</dbReference>
<dbReference type="IntAct" id="Q9XWI6">
    <property type="interactions" value="2"/>
</dbReference>
<dbReference type="STRING" id="6239.Y54E2A.11a.1"/>
<dbReference type="PaxDb" id="6239-Y54E2A.11a.1"/>
<dbReference type="PeptideAtlas" id="Q9XWI6"/>
<dbReference type="GeneID" id="175138"/>
<dbReference type="KEGG" id="cel:CELE_Y54E2A.11"/>
<dbReference type="UCSC" id="Y54E2A.11a.2">
    <property type="organism name" value="c. elegans"/>
</dbReference>
<dbReference type="AGR" id="WB:WBGene00001225"/>
<dbReference type="CTD" id="175138"/>
<dbReference type="WormBase" id="Y54E2A.11">
    <property type="protein sequence ID" value="CE47851"/>
    <property type="gene ID" value="WBGene00001225"/>
    <property type="gene designation" value="eif-3.B"/>
</dbReference>
<dbReference type="eggNOG" id="KOG2314">
    <property type="taxonomic scope" value="Eukaryota"/>
</dbReference>
<dbReference type="GeneTree" id="ENSGT00550000074913"/>
<dbReference type="HOGENOM" id="CLU_011152_1_0_1"/>
<dbReference type="InParanoid" id="Q9XWI6"/>
<dbReference type="OMA" id="LWGGPQF"/>
<dbReference type="OrthoDB" id="10250414at2759"/>
<dbReference type="PhylomeDB" id="Q9XWI6"/>
<dbReference type="Reactome" id="R-CEL-156827">
    <property type="pathway name" value="L13a-mediated translational silencing of Ceruloplasmin expression"/>
</dbReference>
<dbReference type="Reactome" id="R-CEL-72649">
    <property type="pathway name" value="Translation initiation complex formation"/>
</dbReference>
<dbReference type="Reactome" id="R-CEL-72689">
    <property type="pathway name" value="Formation of a pool of free 40S subunits"/>
</dbReference>
<dbReference type="Reactome" id="R-CEL-72695">
    <property type="pathway name" value="Formation of the ternary complex, and subsequently, the 43S complex"/>
</dbReference>
<dbReference type="Reactome" id="R-CEL-72702">
    <property type="pathway name" value="Ribosomal scanning and start codon recognition"/>
</dbReference>
<dbReference type="PRO" id="PR:Q9XWI6"/>
<dbReference type="Proteomes" id="UP000001940">
    <property type="component" value="Chromosome II"/>
</dbReference>
<dbReference type="Bgee" id="WBGene00001225">
    <property type="expression patterns" value="Expressed in larva and 4 other cell types or tissues"/>
</dbReference>
<dbReference type="GO" id="GO:0016282">
    <property type="term" value="C:eukaryotic 43S preinitiation complex"/>
    <property type="evidence" value="ECO:0007669"/>
    <property type="project" value="UniProtKB-UniRule"/>
</dbReference>
<dbReference type="GO" id="GO:0033290">
    <property type="term" value="C:eukaryotic 48S preinitiation complex"/>
    <property type="evidence" value="ECO:0007669"/>
    <property type="project" value="UniProtKB-UniRule"/>
</dbReference>
<dbReference type="GO" id="GO:0005852">
    <property type="term" value="C:eukaryotic translation initiation factor 3 complex"/>
    <property type="evidence" value="ECO:0000250"/>
    <property type="project" value="UniProtKB"/>
</dbReference>
<dbReference type="GO" id="GO:0003723">
    <property type="term" value="F:RNA binding"/>
    <property type="evidence" value="ECO:0007669"/>
    <property type="project" value="UniProtKB-UniRule"/>
</dbReference>
<dbReference type="GO" id="GO:0003743">
    <property type="term" value="F:translation initiation factor activity"/>
    <property type="evidence" value="ECO:0000250"/>
    <property type="project" value="UniProtKB"/>
</dbReference>
<dbReference type="GO" id="GO:0031369">
    <property type="term" value="F:translation initiation factor binding"/>
    <property type="evidence" value="ECO:0007669"/>
    <property type="project" value="InterPro"/>
</dbReference>
<dbReference type="GO" id="GO:0001732">
    <property type="term" value="P:formation of cytoplasmic translation initiation complex"/>
    <property type="evidence" value="ECO:0007669"/>
    <property type="project" value="UniProtKB-UniRule"/>
</dbReference>
<dbReference type="GO" id="GO:0006446">
    <property type="term" value="P:regulation of translational initiation"/>
    <property type="evidence" value="ECO:0000250"/>
    <property type="project" value="UniProtKB"/>
</dbReference>
<dbReference type="GO" id="GO:0006413">
    <property type="term" value="P:translational initiation"/>
    <property type="evidence" value="ECO:0000318"/>
    <property type="project" value="GO_Central"/>
</dbReference>
<dbReference type="Gene3D" id="3.30.70.330">
    <property type="match status" value="1"/>
</dbReference>
<dbReference type="Gene3D" id="2.120.10.30">
    <property type="entry name" value="TolB, C-terminal domain"/>
    <property type="match status" value="1"/>
</dbReference>
<dbReference type="Gene3D" id="2.130.10.10">
    <property type="entry name" value="YVTN repeat-like/Quinoprotein amine dehydrogenase"/>
    <property type="match status" value="1"/>
</dbReference>
<dbReference type="HAMAP" id="MF_03001">
    <property type="entry name" value="eIF3b"/>
    <property type="match status" value="1"/>
</dbReference>
<dbReference type="InterPro" id="IPR011042">
    <property type="entry name" value="6-blade_b-propeller_TolB-like"/>
</dbReference>
<dbReference type="InterPro" id="IPR011400">
    <property type="entry name" value="EIF3B"/>
</dbReference>
<dbReference type="InterPro" id="IPR012677">
    <property type="entry name" value="Nucleotide-bd_a/b_plait_sf"/>
</dbReference>
<dbReference type="InterPro" id="IPR013979">
    <property type="entry name" value="TIF_beta_prop-like"/>
</dbReference>
<dbReference type="InterPro" id="IPR015943">
    <property type="entry name" value="WD40/YVTN_repeat-like_dom_sf"/>
</dbReference>
<dbReference type="PANTHER" id="PTHR14068">
    <property type="entry name" value="EUKARYOTIC TRANSLATION INITIATION FACTOR 3 EIF3 -RELATED"/>
    <property type="match status" value="1"/>
</dbReference>
<dbReference type="PANTHER" id="PTHR14068:SF0">
    <property type="entry name" value="EUKARYOTIC TRANSLATION INITIATION FACTOR 3 SUBUNIT B"/>
    <property type="match status" value="1"/>
</dbReference>
<dbReference type="Pfam" id="PF08662">
    <property type="entry name" value="eIF2A"/>
    <property type="match status" value="1"/>
</dbReference>
<dbReference type="PIRSF" id="PIRSF036424">
    <property type="entry name" value="eIF3b"/>
    <property type="match status" value="1"/>
</dbReference>
<dbReference type="SUPFAM" id="SSF82171">
    <property type="entry name" value="DPP6 N-terminal domain-like"/>
    <property type="match status" value="1"/>
</dbReference>
<name>EIF3B_CAEEL</name>
<accession>Q9XWI6</accession>
<accession>Q7K785</accession>
<sequence length="725" mass="83065">MVEIDFNKENEEDFSDPPGFVDDVTDDVLVPDVLHKKPTIDEFEDNCVFIAGIPVVGADRLGKLQSVLKKVLERLDPAVKLYIPPSPEGGCLGVLLTEWADQRSAQFAVKSLNGYAFDKNHTFTARSFKDMKQLEAPSDHWTTPEKQAYNDVGDLWWWLQNERCRDQFAISHDKLGVPTVGVFTNMKGNDPELAGDADKAERANWTETVFTWSPHGSYLSTIHKQGIILWGGKDYARAHRFAHTNVQYIDFSPCETYLVTYAAPEESNSWGDCEKDSLRIWDVRTGELKKAFSTFELTGRTQLPTWPFFRWSFDEKYFACLKAPEKDKLEREQKINGISIFESEKFELYEGRPVNIENIKQFEWSPTSTVLAYYSECTDAVPAEFGLLQVPSMQRLRSARVHNVADAQMFWQKSGKRLAFYTMRFKKKEYRETGEVKYVGGCQYHVDIFEIDKKDVSLMNLPLSEPFIHFDWDPEGDKFCVLVGNTAKATPQVYKIEANSHAPKLVSKLDAGVHFNEVQFAPKGGWLAVLAKVSAGGNVYFIDTSLSEAKRTNVIEHPLFNKGYWDPTGRYFVTCSTLGGRAGADLGYRIFTFQGRELCRKNLDRLAQFKWRPRPPVKLSEQKQREIKKNLKKTAAKFIKQDDDEKCRASQEVVEKRRKIMAAFDIIRSRNREQLDATRDERISLRNGVDTEAQLDEDEFVDEEITIALSTSKTQAPLTEEEMRD</sequence>
<evidence type="ECO:0000255" key="1">
    <source>
        <dbReference type="HAMAP-Rule" id="MF_03001"/>
    </source>
</evidence>
<evidence type="ECO:0000269" key="2">
    <source>
    </source>
</evidence>
<evidence type="ECO:0000312" key="3">
    <source>
        <dbReference type="WormBase" id="Y54E2A.11"/>
    </source>
</evidence>
<protein>
    <recommendedName>
        <fullName evidence="1">Eukaryotic translation initiation factor 3 subunit B</fullName>
        <shortName evidence="1">eIF3b</shortName>
    </recommendedName>
    <alternativeName>
        <fullName evidence="1">Eukaryotic translation initiation factor 3 subunit 9</fullName>
    </alternativeName>
</protein>
<gene>
    <name evidence="1 3" type="primary">eif-3.B</name>
    <name evidence="3" type="ORF">Y54E2A.11</name>
</gene>
<proteinExistence type="inferred from homology"/>
<feature type="chain" id="PRO_0000363789" description="Eukaryotic translation initiation factor 3 subunit B">
    <location>
        <begin position="1"/>
        <end position="725"/>
    </location>
</feature>
<feature type="domain" description="RRM" evidence="1">
    <location>
        <begin position="46"/>
        <end position="130"/>
    </location>
</feature>
<feature type="repeat" description="WD 1">
    <location>
        <begin position="202"/>
        <end position="240"/>
    </location>
</feature>
<feature type="repeat" description="WD 2">
    <location>
        <begin position="242"/>
        <end position="280"/>
    </location>
</feature>
<feature type="repeat" description="WD 3">
    <location>
        <begin position="354"/>
        <end position="395"/>
    </location>
</feature>
<feature type="repeat" description="WD 4">
    <location>
        <begin position="462"/>
        <end position="504"/>
    </location>
</feature>
<feature type="repeat" description="WD 5">
    <location>
        <begin position="510"/>
        <end position="552"/>
    </location>
</feature>
<feature type="repeat" description="WD 6">
    <location>
        <begin position="554"/>
        <end position="594"/>
    </location>
</feature>
<reference key="1">
    <citation type="journal article" date="1998" name="Science">
        <title>Genome sequence of the nematode C. elegans: a platform for investigating biology.</title>
        <authorList>
            <consortium name="The C. elegans sequencing consortium"/>
        </authorList>
    </citation>
    <scope>NUCLEOTIDE SEQUENCE [LARGE SCALE GENOMIC DNA]</scope>
    <source>
        <strain>Bristol N2</strain>
    </source>
</reference>
<reference key="2">
    <citation type="journal article" date="2007" name="PLoS Genet.">
        <title>Lifespan regulation by evolutionarily conserved genes essential for viability.</title>
        <authorList>
            <person name="Curran S.P."/>
            <person name="Ruvkun G."/>
        </authorList>
    </citation>
    <scope>DISRUPTION PHENOTYPE</scope>
</reference>
<keyword id="KW-0963">Cytoplasm</keyword>
<keyword id="KW-0396">Initiation factor</keyword>
<keyword id="KW-0648">Protein biosynthesis</keyword>
<keyword id="KW-1185">Reference proteome</keyword>
<keyword id="KW-0677">Repeat</keyword>
<keyword id="KW-0694">RNA-binding</keyword>
<keyword id="KW-0853">WD repeat</keyword>